<name>CLPP_CAMJ8</name>
<feature type="chain" id="PRO_1000072340" description="ATP-dependent Clp protease proteolytic subunit">
    <location>
        <begin position="1"/>
        <end position="194"/>
    </location>
</feature>
<feature type="active site" description="Nucleophile" evidence="1">
    <location>
        <position position="97"/>
    </location>
</feature>
<feature type="active site" evidence="1">
    <location>
        <position position="122"/>
    </location>
</feature>
<proteinExistence type="inferred from homology"/>
<gene>
    <name evidence="1" type="primary">clpP</name>
    <name type="ordered locus">C8J_0181</name>
</gene>
<sequence>MFIPYVIEKSSRGERSYDIYSRLLKDRIIMLSGEIHDELAASIVAQLLFLEAEDPTKDIYLYINSPGGVITSGFSIYDTMNYIKPDVCTICIGQAASMGAFLLSCGAEGKRFALPNSRIMIHQPLGGARGQATDIEIQAKEILRLKTILNDILAKNTKQKVAKIAKDTERDFFMSAQEAKEYGLIDKVLEKSFK</sequence>
<protein>
    <recommendedName>
        <fullName evidence="1">ATP-dependent Clp protease proteolytic subunit</fullName>
        <ecNumber evidence="1">3.4.21.92</ecNumber>
    </recommendedName>
    <alternativeName>
        <fullName evidence="1">Endopeptidase Clp</fullName>
    </alternativeName>
</protein>
<comment type="function">
    <text evidence="1">Cleaves peptides in various proteins in a process that requires ATP hydrolysis. Has a chymotrypsin-like activity. Plays a major role in the degradation of misfolded proteins.</text>
</comment>
<comment type="catalytic activity">
    <reaction evidence="1">
        <text>Hydrolysis of proteins to small peptides in the presence of ATP and magnesium. alpha-casein is the usual test substrate. In the absence of ATP, only oligopeptides shorter than five residues are hydrolyzed (such as succinyl-Leu-Tyr-|-NHMec, and Leu-Tyr-Leu-|-Tyr-Trp, in which cleavage of the -Tyr-|-Leu- and -Tyr-|-Trp bonds also occurs).</text>
        <dbReference type="EC" id="3.4.21.92"/>
    </reaction>
</comment>
<comment type="subunit">
    <text evidence="1">Fourteen ClpP subunits assemble into 2 heptameric rings which stack back to back to give a disk-like structure with a central cavity, resembling the structure of eukaryotic proteasomes.</text>
</comment>
<comment type="subcellular location">
    <subcellularLocation>
        <location evidence="1">Cytoplasm</location>
    </subcellularLocation>
</comment>
<comment type="similarity">
    <text evidence="1">Belongs to the peptidase S14 family.</text>
</comment>
<organism>
    <name type="scientific">Campylobacter jejuni subsp. jejuni serotype O:6 (strain 81116 / NCTC 11828)</name>
    <dbReference type="NCBI Taxonomy" id="407148"/>
    <lineage>
        <taxon>Bacteria</taxon>
        <taxon>Pseudomonadati</taxon>
        <taxon>Campylobacterota</taxon>
        <taxon>Epsilonproteobacteria</taxon>
        <taxon>Campylobacterales</taxon>
        <taxon>Campylobacteraceae</taxon>
        <taxon>Campylobacter</taxon>
    </lineage>
</organism>
<accession>A8FJZ3</accession>
<dbReference type="EC" id="3.4.21.92" evidence="1"/>
<dbReference type="EMBL" id="CP000814">
    <property type="protein sequence ID" value="ABV51780.1"/>
    <property type="molecule type" value="Genomic_DNA"/>
</dbReference>
<dbReference type="RefSeq" id="WP_002806309.1">
    <property type="nucleotide sequence ID" value="NC_009839.1"/>
</dbReference>
<dbReference type="SMR" id="A8FJZ3"/>
<dbReference type="MEROPS" id="S14.001"/>
<dbReference type="KEGG" id="cju:C8J_0181"/>
<dbReference type="HOGENOM" id="CLU_058707_3_2_7"/>
<dbReference type="GO" id="GO:0005737">
    <property type="term" value="C:cytoplasm"/>
    <property type="evidence" value="ECO:0007669"/>
    <property type="project" value="UniProtKB-SubCell"/>
</dbReference>
<dbReference type="GO" id="GO:0009368">
    <property type="term" value="C:endopeptidase Clp complex"/>
    <property type="evidence" value="ECO:0007669"/>
    <property type="project" value="TreeGrafter"/>
</dbReference>
<dbReference type="GO" id="GO:0004176">
    <property type="term" value="F:ATP-dependent peptidase activity"/>
    <property type="evidence" value="ECO:0007669"/>
    <property type="project" value="InterPro"/>
</dbReference>
<dbReference type="GO" id="GO:0051117">
    <property type="term" value="F:ATPase binding"/>
    <property type="evidence" value="ECO:0007669"/>
    <property type="project" value="TreeGrafter"/>
</dbReference>
<dbReference type="GO" id="GO:0004252">
    <property type="term" value="F:serine-type endopeptidase activity"/>
    <property type="evidence" value="ECO:0007669"/>
    <property type="project" value="UniProtKB-UniRule"/>
</dbReference>
<dbReference type="GO" id="GO:0006515">
    <property type="term" value="P:protein quality control for misfolded or incompletely synthesized proteins"/>
    <property type="evidence" value="ECO:0007669"/>
    <property type="project" value="TreeGrafter"/>
</dbReference>
<dbReference type="CDD" id="cd07017">
    <property type="entry name" value="S14_ClpP_2"/>
    <property type="match status" value="1"/>
</dbReference>
<dbReference type="FunFam" id="3.90.226.10:FF:000001">
    <property type="entry name" value="ATP-dependent Clp protease proteolytic subunit"/>
    <property type="match status" value="1"/>
</dbReference>
<dbReference type="Gene3D" id="3.90.226.10">
    <property type="entry name" value="2-enoyl-CoA Hydratase, Chain A, domain 1"/>
    <property type="match status" value="1"/>
</dbReference>
<dbReference type="HAMAP" id="MF_00444">
    <property type="entry name" value="ClpP"/>
    <property type="match status" value="1"/>
</dbReference>
<dbReference type="InterPro" id="IPR001907">
    <property type="entry name" value="ClpP"/>
</dbReference>
<dbReference type="InterPro" id="IPR029045">
    <property type="entry name" value="ClpP/crotonase-like_dom_sf"/>
</dbReference>
<dbReference type="InterPro" id="IPR023562">
    <property type="entry name" value="ClpP/TepA"/>
</dbReference>
<dbReference type="InterPro" id="IPR033135">
    <property type="entry name" value="ClpP_His_AS"/>
</dbReference>
<dbReference type="InterPro" id="IPR018215">
    <property type="entry name" value="ClpP_Ser_AS"/>
</dbReference>
<dbReference type="NCBIfam" id="TIGR00493">
    <property type="entry name" value="clpP"/>
    <property type="match status" value="1"/>
</dbReference>
<dbReference type="NCBIfam" id="NF001368">
    <property type="entry name" value="PRK00277.1"/>
    <property type="match status" value="1"/>
</dbReference>
<dbReference type="NCBIfam" id="NF009205">
    <property type="entry name" value="PRK12553.1"/>
    <property type="match status" value="1"/>
</dbReference>
<dbReference type="PANTHER" id="PTHR10381">
    <property type="entry name" value="ATP-DEPENDENT CLP PROTEASE PROTEOLYTIC SUBUNIT"/>
    <property type="match status" value="1"/>
</dbReference>
<dbReference type="PANTHER" id="PTHR10381:SF70">
    <property type="entry name" value="ATP-DEPENDENT CLP PROTEASE PROTEOLYTIC SUBUNIT"/>
    <property type="match status" value="1"/>
</dbReference>
<dbReference type="Pfam" id="PF00574">
    <property type="entry name" value="CLP_protease"/>
    <property type="match status" value="1"/>
</dbReference>
<dbReference type="PRINTS" id="PR00127">
    <property type="entry name" value="CLPPROTEASEP"/>
</dbReference>
<dbReference type="SUPFAM" id="SSF52096">
    <property type="entry name" value="ClpP/crotonase"/>
    <property type="match status" value="1"/>
</dbReference>
<dbReference type="PROSITE" id="PS00382">
    <property type="entry name" value="CLP_PROTEASE_HIS"/>
    <property type="match status" value="1"/>
</dbReference>
<dbReference type="PROSITE" id="PS00381">
    <property type="entry name" value="CLP_PROTEASE_SER"/>
    <property type="match status" value="1"/>
</dbReference>
<evidence type="ECO:0000255" key="1">
    <source>
        <dbReference type="HAMAP-Rule" id="MF_00444"/>
    </source>
</evidence>
<reference key="1">
    <citation type="journal article" date="2007" name="J. Bacteriol.">
        <title>The complete genome sequence of Campylobacter jejuni strain 81116 (NCTC11828).</title>
        <authorList>
            <person name="Pearson B.M."/>
            <person name="Gaskin D.J.H."/>
            <person name="Segers R.P.A.M."/>
            <person name="Wells J.M."/>
            <person name="Nuijten P.J.M."/>
            <person name="van Vliet A.H.M."/>
        </authorList>
    </citation>
    <scope>NUCLEOTIDE SEQUENCE [LARGE SCALE GENOMIC DNA]</scope>
    <source>
        <strain>81116 / NCTC 11828</strain>
    </source>
</reference>
<keyword id="KW-0963">Cytoplasm</keyword>
<keyword id="KW-0378">Hydrolase</keyword>
<keyword id="KW-0645">Protease</keyword>
<keyword id="KW-0720">Serine protease</keyword>